<feature type="signal peptide" evidence="1">
    <location>
        <begin position="1"/>
        <end position="21"/>
    </location>
</feature>
<feature type="peptide" id="PRO_0000018169" description="Entericidin B">
    <location>
        <begin position="22"/>
        <end position="48"/>
    </location>
</feature>
<feature type="lipid moiety-binding region" description="N-palmitoyl cysteine" evidence="2">
    <location>
        <position position="22"/>
    </location>
</feature>
<feature type="lipid moiety-binding region" description="S-diacylglycerol cysteine" evidence="2">
    <location>
        <position position="22"/>
    </location>
</feature>
<protein>
    <recommendedName>
        <fullName>Entericidin B</fullName>
    </recommendedName>
</protein>
<evidence type="ECO:0000255" key="1">
    <source>
        <dbReference type="PROSITE-ProRule" id="PRU00303"/>
    </source>
</evidence>
<evidence type="ECO:0000305" key="2"/>
<keyword id="KW-1003">Cell membrane</keyword>
<keyword id="KW-0449">Lipoprotein</keyword>
<keyword id="KW-0472">Membrane</keyword>
<keyword id="KW-0564">Palmitate</keyword>
<keyword id="KW-0732">Signal</keyword>
<reference key="1">
    <citation type="journal article" date="1998" name="J. Mol. Biol.">
        <title>The entericidin locus of Escherichia coli and its implications for programmed bacterial cell death.</title>
        <authorList>
            <person name="Bishop R.E."/>
            <person name="Leskiw B.K."/>
            <person name="Hodges R.S."/>
            <person name="Kay C.M."/>
            <person name="Weiner J.H."/>
        </authorList>
    </citation>
    <scope>NUCLEOTIDE SEQUENCE [GENOMIC DNA]</scope>
    <source>
        <strain>OS60</strain>
    </source>
</reference>
<proteinExistence type="inferred from homology"/>
<sequence>MVKKTIAAIFSVLVLSSVLTACNTTRGVGQDISEGGSAISGAGTKAQQ</sequence>
<organism>
    <name type="scientific">Citrobacter freundii</name>
    <dbReference type="NCBI Taxonomy" id="546"/>
    <lineage>
        <taxon>Bacteria</taxon>
        <taxon>Pseudomonadati</taxon>
        <taxon>Pseudomonadota</taxon>
        <taxon>Gammaproteobacteria</taxon>
        <taxon>Enterobacterales</taxon>
        <taxon>Enterobacteriaceae</taxon>
        <taxon>Citrobacter</taxon>
        <taxon>Citrobacter freundii complex</taxon>
    </lineage>
</organism>
<accession>P56550</accession>
<comment type="function">
    <text>Plays a role in the bacteriolysis. Is activated under conditions of high osmolarity by the factor sigma S. Entericidin A functions as an antidote.</text>
</comment>
<comment type="subcellular location">
    <subcellularLocation>
        <location>Cell membrane</location>
        <topology>Lipid-anchor</topology>
    </subcellularLocation>
</comment>
<comment type="similarity">
    <text evidence="2">Belongs to the EcnA/EcnB lipoprotein family.</text>
</comment>
<gene>
    <name type="primary">ecnB</name>
</gene>
<name>ECNB_CITFR</name>
<dbReference type="EMBL" id="U21727">
    <property type="protein sequence ID" value="AAC46459.1"/>
    <property type="molecule type" value="Genomic_DNA"/>
</dbReference>
<dbReference type="STRING" id="1333848.CFNIH1_08395"/>
<dbReference type="GO" id="GO:0005886">
    <property type="term" value="C:plasma membrane"/>
    <property type="evidence" value="ECO:0007669"/>
    <property type="project" value="UniProtKB-SubCell"/>
</dbReference>
<dbReference type="GO" id="GO:0009636">
    <property type="term" value="P:response to toxic substance"/>
    <property type="evidence" value="ECO:0007669"/>
    <property type="project" value="InterPro"/>
</dbReference>
<dbReference type="InterPro" id="IPR012556">
    <property type="entry name" value="Entericidin"/>
</dbReference>
<dbReference type="NCBIfam" id="NF007487">
    <property type="entry name" value="PRK10081.1"/>
    <property type="match status" value="1"/>
</dbReference>
<dbReference type="Pfam" id="PF08085">
    <property type="entry name" value="Entericidin"/>
    <property type="match status" value="1"/>
</dbReference>
<dbReference type="PROSITE" id="PS51257">
    <property type="entry name" value="PROKAR_LIPOPROTEIN"/>
    <property type="match status" value="1"/>
</dbReference>